<accession>O74104</accession>
<accession>O59520</accession>
<dbReference type="EMBL" id="BA000001">
    <property type="protein sequence ID" value="BAA31023.1"/>
    <property type="molecule type" value="Genomic_DNA"/>
</dbReference>
<dbReference type="PIR" id="H71203">
    <property type="entry name" value="H71203"/>
</dbReference>
<dbReference type="RefSeq" id="WP_010885963.1">
    <property type="nucleotide sequence ID" value="NC_000961.1"/>
</dbReference>
<dbReference type="SMR" id="O74104"/>
<dbReference type="STRING" id="70601.gene:9378908"/>
<dbReference type="EnsemblBacteria" id="BAA31023">
    <property type="protein sequence ID" value="BAA31023"/>
    <property type="gene ID" value="BAA31023"/>
</dbReference>
<dbReference type="GeneID" id="1442745"/>
<dbReference type="KEGG" id="pho:PH1900"/>
<dbReference type="eggNOG" id="arCOG03247">
    <property type="taxonomic scope" value="Archaea"/>
</dbReference>
<dbReference type="OrthoDB" id="117530at2157"/>
<dbReference type="Proteomes" id="UP000000752">
    <property type="component" value="Chromosome"/>
</dbReference>
<dbReference type="GO" id="GO:0019843">
    <property type="term" value="F:rRNA binding"/>
    <property type="evidence" value="ECO:0007669"/>
    <property type="project" value="InterPro"/>
</dbReference>
<dbReference type="GO" id="GO:0006364">
    <property type="term" value="P:rRNA processing"/>
    <property type="evidence" value="ECO:0007669"/>
    <property type="project" value="InterPro"/>
</dbReference>
<dbReference type="Gene3D" id="3.40.50.10480">
    <property type="entry name" value="Probable brix-domain ribosomal biogenesis protein"/>
    <property type="match status" value="1"/>
</dbReference>
<dbReference type="HAMAP" id="MF_00699">
    <property type="entry name" value="BriX"/>
    <property type="match status" value="1"/>
</dbReference>
<dbReference type="InterPro" id="IPR007109">
    <property type="entry name" value="Brix"/>
</dbReference>
<dbReference type="InterPro" id="IPR023548">
    <property type="entry name" value="Brix_dom_Rbsml_bgen_prot"/>
</dbReference>
<dbReference type="NCBIfam" id="NF003053">
    <property type="entry name" value="PRK03972.1"/>
    <property type="match status" value="1"/>
</dbReference>
<dbReference type="SMART" id="SM00879">
    <property type="entry name" value="Brix"/>
    <property type="match status" value="1"/>
</dbReference>
<dbReference type="SUPFAM" id="SSF52954">
    <property type="entry name" value="Class II aaRS ABD-related"/>
    <property type="match status" value="1"/>
</dbReference>
<dbReference type="PROSITE" id="PS50833">
    <property type="entry name" value="BRIX"/>
    <property type="match status" value="1"/>
</dbReference>
<feature type="chain" id="PRO_0000120278" description="Probable Brix domain-containing ribosomal biogenesis protein">
    <location>
        <begin position="1"/>
        <end position="224"/>
    </location>
</feature>
<feature type="domain" description="Brix" evidence="1">
    <location>
        <begin position="1"/>
        <end position="196"/>
    </location>
</feature>
<organism>
    <name type="scientific">Pyrococcus horikoshii (strain ATCC 700860 / DSM 12428 / JCM 9974 / NBRC 100139 / OT-3)</name>
    <dbReference type="NCBI Taxonomy" id="70601"/>
    <lineage>
        <taxon>Archaea</taxon>
        <taxon>Methanobacteriati</taxon>
        <taxon>Methanobacteriota</taxon>
        <taxon>Thermococci</taxon>
        <taxon>Thermococcales</taxon>
        <taxon>Thermococcaceae</taxon>
        <taxon>Pyrococcus</taxon>
    </lineage>
</organism>
<sequence length="224" mass="26126">MMLITTSHRPTRRTRSFGHDLERVIPNSLYLTRGKKTIQELLMEAYDRGYERLLIINVWKGNPLKMTFIKVHPEDWGYLGYLYLHGVKLQREMGFKGLNPIREDMPLVITTAKRVGLDHLAFAQVFSELTTGKFVPRGDKSLLSIADRYNTDVLAVIERHPRGIVINFYRLDITKDRPVGPLINVKIWIMEDGRRWDYKEAFGIKVPPRRREFEGKRGEGKNSD</sequence>
<protein>
    <recommendedName>
        <fullName evidence="1">Probable Brix domain-containing ribosomal biogenesis protein</fullName>
    </recommendedName>
</protein>
<reference key="1">
    <citation type="journal article" date="1998" name="DNA Res.">
        <title>Complete sequence and gene organization of the genome of a hyper-thermophilic archaebacterium, Pyrococcus horikoshii OT3.</title>
        <authorList>
            <person name="Kawarabayasi Y."/>
            <person name="Sawada M."/>
            <person name="Horikawa H."/>
            <person name="Haikawa Y."/>
            <person name="Hino Y."/>
            <person name="Yamamoto S."/>
            <person name="Sekine M."/>
            <person name="Baba S."/>
            <person name="Kosugi H."/>
            <person name="Hosoyama A."/>
            <person name="Nagai Y."/>
            <person name="Sakai M."/>
            <person name="Ogura K."/>
            <person name="Otsuka R."/>
            <person name="Nakazawa H."/>
            <person name="Takamiya M."/>
            <person name="Ohfuku Y."/>
            <person name="Funahashi T."/>
            <person name="Tanaka T."/>
            <person name="Kudoh Y."/>
            <person name="Yamazaki J."/>
            <person name="Kushida N."/>
            <person name="Oguchi A."/>
            <person name="Aoki K."/>
            <person name="Yoshizawa T."/>
            <person name="Nakamura Y."/>
            <person name="Robb F.T."/>
            <person name="Horikoshi K."/>
            <person name="Masuchi Y."/>
            <person name="Shizuya H."/>
            <person name="Kikuchi H."/>
        </authorList>
    </citation>
    <scope>NUCLEOTIDE SEQUENCE [LARGE SCALE GENOMIC DNA]</scope>
    <source>
        <strain>ATCC 700860 / DSM 12428 / JCM 9974 / NBRC 100139 / OT-3</strain>
    </source>
</reference>
<name>BRIX_PYRHO</name>
<gene>
    <name type="ordered locus">PH1900</name>
</gene>
<comment type="function">
    <text evidence="1">Probably involved in the biogenesis of the ribosome.</text>
</comment>
<evidence type="ECO:0000255" key="1">
    <source>
        <dbReference type="HAMAP-Rule" id="MF_00699"/>
    </source>
</evidence>
<keyword id="KW-0690">Ribosome biogenesis</keyword>
<proteinExistence type="inferred from homology"/>